<sequence>MYVLGMMSGTSADGVDTVLAEFTGNPDQPQWRIINSTSHEYPNNLKQAIIDFGQGCSFSSQQFIELSEAITEFYAMAAKSCDPKGIALIAGCHGQTVFHRPPSGAKRGSSLQILQAPLLAILIDKTVIYDFRSKDLALGGQGAPLVPLLDAALIGACTGWRAVLNLGGIANISLIPPRSGPDKTSPVLGWDCGPANTLIDLAVQQRTNHELYFDHDGLIALNGSPDFDAIEQWLNEPFFKKPPPKSTGREQFGLKDLERRMTQINRSSTKDLVSTLTIFSACVIAQDLHNLYKSKMIKPIELFIAGGGSENPVLFREIQLRCRGMRVRSIGEIGIPVKSREPLTFALLAWWHLLNKPGSSTAITGVSKGAVLGVQVHPN</sequence>
<organism>
    <name type="scientific">Prochlorococcus marinus (strain MIT 9211)</name>
    <dbReference type="NCBI Taxonomy" id="93059"/>
    <lineage>
        <taxon>Bacteria</taxon>
        <taxon>Bacillati</taxon>
        <taxon>Cyanobacteriota</taxon>
        <taxon>Cyanophyceae</taxon>
        <taxon>Synechococcales</taxon>
        <taxon>Prochlorococcaceae</taxon>
        <taxon>Prochlorococcus</taxon>
    </lineage>
</organism>
<proteinExistence type="inferred from homology"/>
<accession>A9B9H1</accession>
<keyword id="KW-0067">ATP-binding</keyword>
<keyword id="KW-0119">Carbohydrate metabolism</keyword>
<keyword id="KW-0418">Kinase</keyword>
<keyword id="KW-0547">Nucleotide-binding</keyword>
<keyword id="KW-1185">Reference proteome</keyword>
<keyword id="KW-0808">Transferase</keyword>
<evidence type="ECO:0000255" key="1">
    <source>
        <dbReference type="HAMAP-Rule" id="MF_01270"/>
    </source>
</evidence>
<feature type="chain" id="PRO_1000214172" description="Anhydro-N-acetylmuramic acid kinase">
    <location>
        <begin position="1"/>
        <end position="379"/>
    </location>
</feature>
<feature type="binding site" evidence="1">
    <location>
        <begin position="9"/>
        <end position="16"/>
    </location>
    <ligand>
        <name>ATP</name>
        <dbReference type="ChEBI" id="CHEBI:30616"/>
    </ligand>
</feature>
<dbReference type="EC" id="2.7.1.170" evidence="1"/>
<dbReference type="EMBL" id="CP000878">
    <property type="protein sequence ID" value="ABX08026.1"/>
    <property type="molecule type" value="Genomic_DNA"/>
</dbReference>
<dbReference type="RefSeq" id="WP_012194651.1">
    <property type="nucleotide sequence ID" value="NC_009976.1"/>
</dbReference>
<dbReference type="SMR" id="A9B9H1"/>
<dbReference type="STRING" id="93059.P9211_00951"/>
<dbReference type="KEGG" id="pmj:P9211_00951"/>
<dbReference type="eggNOG" id="COG2377">
    <property type="taxonomic scope" value="Bacteria"/>
</dbReference>
<dbReference type="HOGENOM" id="CLU_038782_1_0_3"/>
<dbReference type="OrthoDB" id="9763949at2"/>
<dbReference type="UniPathway" id="UPA00343"/>
<dbReference type="UniPathway" id="UPA00544"/>
<dbReference type="Proteomes" id="UP000000788">
    <property type="component" value="Chromosome"/>
</dbReference>
<dbReference type="GO" id="GO:0005524">
    <property type="term" value="F:ATP binding"/>
    <property type="evidence" value="ECO:0007669"/>
    <property type="project" value="UniProtKB-UniRule"/>
</dbReference>
<dbReference type="GO" id="GO:0016301">
    <property type="term" value="F:kinase activity"/>
    <property type="evidence" value="ECO:0007669"/>
    <property type="project" value="UniProtKB-KW"/>
</dbReference>
<dbReference type="GO" id="GO:0016773">
    <property type="term" value="F:phosphotransferase activity, alcohol group as acceptor"/>
    <property type="evidence" value="ECO:0007669"/>
    <property type="project" value="UniProtKB-UniRule"/>
</dbReference>
<dbReference type="GO" id="GO:0097175">
    <property type="term" value="P:1,6-anhydro-N-acetyl-beta-muramic acid catabolic process"/>
    <property type="evidence" value="ECO:0007669"/>
    <property type="project" value="UniProtKB-UniRule"/>
</dbReference>
<dbReference type="GO" id="GO:0006040">
    <property type="term" value="P:amino sugar metabolic process"/>
    <property type="evidence" value="ECO:0007669"/>
    <property type="project" value="InterPro"/>
</dbReference>
<dbReference type="GO" id="GO:0009254">
    <property type="term" value="P:peptidoglycan turnover"/>
    <property type="evidence" value="ECO:0007669"/>
    <property type="project" value="UniProtKB-UniRule"/>
</dbReference>
<dbReference type="Gene3D" id="3.30.420.40">
    <property type="match status" value="2"/>
</dbReference>
<dbReference type="HAMAP" id="MF_01270">
    <property type="entry name" value="AnhMurNAc_kinase"/>
    <property type="match status" value="1"/>
</dbReference>
<dbReference type="InterPro" id="IPR005338">
    <property type="entry name" value="Anhydro_N_Ac-Mur_kinase"/>
</dbReference>
<dbReference type="InterPro" id="IPR043129">
    <property type="entry name" value="ATPase_NBD"/>
</dbReference>
<dbReference type="NCBIfam" id="NF007145">
    <property type="entry name" value="PRK09585.2-5"/>
    <property type="match status" value="1"/>
</dbReference>
<dbReference type="PANTHER" id="PTHR30605">
    <property type="entry name" value="ANHYDRO-N-ACETYLMURAMIC ACID KINASE"/>
    <property type="match status" value="1"/>
</dbReference>
<dbReference type="PANTHER" id="PTHR30605:SF0">
    <property type="entry name" value="ANHYDRO-N-ACETYLMURAMIC ACID KINASE"/>
    <property type="match status" value="1"/>
</dbReference>
<dbReference type="Pfam" id="PF03702">
    <property type="entry name" value="AnmK"/>
    <property type="match status" value="1"/>
</dbReference>
<dbReference type="SUPFAM" id="SSF53067">
    <property type="entry name" value="Actin-like ATPase domain"/>
    <property type="match status" value="1"/>
</dbReference>
<protein>
    <recommendedName>
        <fullName evidence="1">Anhydro-N-acetylmuramic acid kinase</fullName>
        <ecNumber evidence="1">2.7.1.170</ecNumber>
    </recommendedName>
    <alternativeName>
        <fullName evidence="1">AnhMurNAc kinase</fullName>
    </alternativeName>
</protein>
<name>ANMK_PROM4</name>
<gene>
    <name evidence="1" type="primary">anmK</name>
    <name type="ordered locus">P9211_00951</name>
</gene>
<comment type="function">
    <text evidence="1">Catalyzes the specific phosphorylation of 1,6-anhydro-N-acetylmuramic acid (anhMurNAc) with the simultaneous cleavage of the 1,6-anhydro ring, generating MurNAc-6-P. Is required for the utilization of anhMurNAc either imported from the medium or derived from its own cell wall murein, and thus plays a role in cell wall recycling.</text>
</comment>
<comment type="catalytic activity">
    <reaction evidence="1">
        <text>1,6-anhydro-N-acetyl-beta-muramate + ATP + H2O = N-acetyl-D-muramate 6-phosphate + ADP + H(+)</text>
        <dbReference type="Rhea" id="RHEA:24952"/>
        <dbReference type="ChEBI" id="CHEBI:15377"/>
        <dbReference type="ChEBI" id="CHEBI:15378"/>
        <dbReference type="ChEBI" id="CHEBI:30616"/>
        <dbReference type="ChEBI" id="CHEBI:58690"/>
        <dbReference type="ChEBI" id="CHEBI:58722"/>
        <dbReference type="ChEBI" id="CHEBI:456216"/>
        <dbReference type="EC" id="2.7.1.170"/>
    </reaction>
</comment>
<comment type="pathway">
    <text evidence="1">Amino-sugar metabolism; 1,6-anhydro-N-acetylmuramate degradation.</text>
</comment>
<comment type="pathway">
    <text evidence="1">Cell wall biogenesis; peptidoglycan recycling.</text>
</comment>
<comment type="similarity">
    <text evidence="1">Belongs to the anhydro-N-acetylmuramic acid kinase family.</text>
</comment>
<reference key="1">
    <citation type="journal article" date="2007" name="PLoS Genet.">
        <title>Patterns and implications of gene gain and loss in the evolution of Prochlorococcus.</title>
        <authorList>
            <person name="Kettler G.C."/>
            <person name="Martiny A.C."/>
            <person name="Huang K."/>
            <person name="Zucker J."/>
            <person name="Coleman M.L."/>
            <person name="Rodrigue S."/>
            <person name="Chen F."/>
            <person name="Lapidus A."/>
            <person name="Ferriera S."/>
            <person name="Johnson J."/>
            <person name="Steglich C."/>
            <person name="Church G.M."/>
            <person name="Richardson P."/>
            <person name="Chisholm S.W."/>
        </authorList>
    </citation>
    <scope>NUCLEOTIDE SEQUENCE [LARGE SCALE GENOMIC DNA]</scope>
    <source>
        <strain>MIT 9211</strain>
    </source>
</reference>